<sequence>METAENIPCSMLGDNFKEVCAEKVIRFRPPLYKQRYQFVRDLVDRHEPKKVADLGCGDTKLLKLLKIYPCIQLLVGVDINEEKLHSNGHRLSPYLGEFVKPRDLDLTVTLYHGSVVERDSRLLGFDLITCIELIEHLDSDDLARFPEVVFGYLSPAMVVISTPNAEFNPLFPTVTLRDADHKFEWSRMEFQTWASQVANCYNYCVEFTGVGTPPAGSEHVGYCTQIGVFRKNGGKLSEPSASQQRDQHVYKAVYTTSYPSLQQEKVLKFVLVGELLIQVDRLRLRHQRMLREQEKERGPKPWYTDSSPAPHLLLGAVFTEAEKARIENSPKPFCEGEKFYIPLQRLLTYPKLHRLCADEDRMRSLIADSVCLSSDGSAVVVDLHNSWDYRPEDN</sequence>
<proteinExistence type="evidence at transcript level"/>
<comment type="function">
    <text evidence="2">Methyltransferase that adds a 2'-O-methyl group at the 3'-end of piRNAs, a class of 24 to 30 nucleotide RNAs that are generated by a Dicer-independent mechanism and are primarily derived from transposons and other repeated sequence elements. This probably protects the 3'-end of piRNAs from uridylation activity and subsequent degradation. Stabilization of piRNAs is essential for gametogenesis.</text>
</comment>
<comment type="catalytic activity">
    <reaction evidence="2">
        <text>small RNA 3'-end nucleotide + S-adenosyl-L-methionine = small RNA 3'-end 2'-O-methylnucleotide + S-adenosyl-L-homocysteine + H(+)</text>
        <dbReference type="Rhea" id="RHEA:37887"/>
        <dbReference type="Rhea" id="RHEA-COMP:10415"/>
        <dbReference type="Rhea" id="RHEA-COMP:10416"/>
        <dbReference type="ChEBI" id="CHEBI:15378"/>
        <dbReference type="ChEBI" id="CHEBI:57856"/>
        <dbReference type="ChEBI" id="CHEBI:59789"/>
        <dbReference type="ChEBI" id="CHEBI:74896"/>
        <dbReference type="ChEBI" id="CHEBI:74898"/>
        <dbReference type="EC" id="2.1.1.386"/>
    </reaction>
</comment>
<comment type="cofactor">
    <cofactor evidence="3">
        <name>Mg(2+)</name>
        <dbReference type="ChEBI" id="CHEBI:18420"/>
    </cofactor>
    <text evidence="3">Binds 1 Mg(2+) ion per subunit.</text>
</comment>
<comment type="subcellular location">
    <subcellularLocation>
        <location evidence="1">Cytoplasm</location>
    </subcellularLocation>
    <text evidence="1">Component of the meiotic nuage, also named P granule, a germ-cell-specific organelle required to repress transposon activity during meiosis.</text>
</comment>
<comment type="similarity">
    <text evidence="4">Belongs to the methyltransferase superfamily. HEN1 family.</text>
</comment>
<gene>
    <name type="primary">Henmt1</name>
</gene>
<dbReference type="EC" id="2.1.1.386" evidence="2"/>
<dbReference type="EMBL" id="BC107926">
    <property type="protein sequence ID" value="AAI07927.1"/>
    <property type="molecule type" value="mRNA"/>
</dbReference>
<dbReference type="RefSeq" id="NP_001032744.2">
    <property type="nucleotide sequence ID" value="NM_001037655.1"/>
</dbReference>
<dbReference type="SMR" id="Q32PY6"/>
<dbReference type="FunCoup" id="Q32PY6">
    <property type="interactions" value="141"/>
</dbReference>
<dbReference type="PhosphoSitePlus" id="Q32PY6"/>
<dbReference type="PaxDb" id="10116-ENSRNOP00000060946"/>
<dbReference type="GeneID" id="100363095"/>
<dbReference type="KEGG" id="rno:100363095"/>
<dbReference type="AGR" id="RGD:1306230"/>
<dbReference type="CTD" id="113802"/>
<dbReference type="RGD" id="1306230">
    <property type="gene designation" value="Henmt1"/>
</dbReference>
<dbReference type="eggNOG" id="KOG1045">
    <property type="taxonomic scope" value="Eukaryota"/>
</dbReference>
<dbReference type="InParanoid" id="Q32PY6"/>
<dbReference type="OrthoDB" id="2154311at2759"/>
<dbReference type="PhylomeDB" id="Q32PY6"/>
<dbReference type="PRO" id="PR:Q32PY6"/>
<dbReference type="Proteomes" id="UP000002494">
    <property type="component" value="Unplaced"/>
</dbReference>
<dbReference type="GO" id="GO:0005737">
    <property type="term" value="C:cytoplasm"/>
    <property type="evidence" value="ECO:0000318"/>
    <property type="project" value="GO_Central"/>
</dbReference>
<dbReference type="GO" id="GO:0005634">
    <property type="term" value="C:nucleus"/>
    <property type="evidence" value="ECO:0000318"/>
    <property type="project" value="GO_Central"/>
</dbReference>
<dbReference type="GO" id="GO:0043186">
    <property type="term" value="C:P granule"/>
    <property type="evidence" value="ECO:0000250"/>
    <property type="project" value="UniProtKB"/>
</dbReference>
<dbReference type="GO" id="GO:0046872">
    <property type="term" value="F:metal ion binding"/>
    <property type="evidence" value="ECO:0007669"/>
    <property type="project" value="UniProtKB-KW"/>
</dbReference>
<dbReference type="GO" id="GO:0008171">
    <property type="term" value="F:O-methyltransferase activity"/>
    <property type="evidence" value="ECO:0000250"/>
    <property type="project" value="UniProtKB"/>
</dbReference>
<dbReference type="GO" id="GO:0003723">
    <property type="term" value="F:RNA binding"/>
    <property type="evidence" value="ECO:0007669"/>
    <property type="project" value="UniProtKB-KW"/>
</dbReference>
<dbReference type="GO" id="GO:0008173">
    <property type="term" value="F:RNA methyltransferase activity"/>
    <property type="evidence" value="ECO:0000250"/>
    <property type="project" value="UniProtKB"/>
</dbReference>
<dbReference type="GO" id="GO:0090486">
    <property type="term" value="F:small RNA 2'-O-methyltransferase activity"/>
    <property type="evidence" value="ECO:0000266"/>
    <property type="project" value="RGD"/>
</dbReference>
<dbReference type="GO" id="GO:0034587">
    <property type="term" value="P:piRNA processing"/>
    <property type="evidence" value="ECO:0000250"/>
    <property type="project" value="UniProtKB"/>
</dbReference>
<dbReference type="GO" id="GO:0001510">
    <property type="term" value="P:RNA methylation"/>
    <property type="evidence" value="ECO:0000250"/>
    <property type="project" value="UniProtKB"/>
</dbReference>
<dbReference type="GO" id="GO:0030422">
    <property type="term" value="P:siRNA processing"/>
    <property type="evidence" value="ECO:0000318"/>
    <property type="project" value="GO_Central"/>
</dbReference>
<dbReference type="FunFam" id="3.40.50.150:FF:000124">
    <property type="entry name" value="HEN methyltransferase 1"/>
    <property type="match status" value="1"/>
</dbReference>
<dbReference type="Gene3D" id="3.40.50.150">
    <property type="entry name" value="Vaccinia Virus protein VP39"/>
    <property type="match status" value="1"/>
</dbReference>
<dbReference type="InterPro" id="IPR026610">
    <property type="entry name" value="Hen1"/>
</dbReference>
<dbReference type="InterPro" id="IPR029063">
    <property type="entry name" value="SAM-dependent_MTases_sf"/>
</dbReference>
<dbReference type="PANTHER" id="PTHR21404">
    <property type="entry name" value="HEN1"/>
    <property type="match status" value="1"/>
</dbReference>
<dbReference type="PANTHER" id="PTHR21404:SF3">
    <property type="entry name" value="SMALL RNA 2'-O-METHYLTRANSFERASE"/>
    <property type="match status" value="1"/>
</dbReference>
<dbReference type="Pfam" id="PF13489">
    <property type="entry name" value="Methyltransf_23"/>
    <property type="match status" value="1"/>
</dbReference>
<dbReference type="SUPFAM" id="SSF53335">
    <property type="entry name" value="S-adenosyl-L-methionine-dependent methyltransferases"/>
    <property type="match status" value="1"/>
</dbReference>
<evidence type="ECO:0000250" key="1">
    <source>
        <dbReference type="UniProtKB" id="Q568P9"/>
    </source>
</evidence>
<evidence type="ECO:0000250" key="2">
    <source>
        <dbReference type="UniProtKB" id="Q8CAE2"/>
    </source>
</evidence>
<evidence type="ECO:0000250" key="3">
    <source>
        <dbReference type="UniProtKB" id="Q9C5Q8"/>
    </source>
</evidence>
<evidence type="ECO:0000305" key="4"/>
<keyword id="KW-0963">Cytoplasm</keyword>
<keyword id="KW-0460">Magnesium</keyword>
<keyword id="KW-0479">Metal-binding</keyword>
<keyword id="KW-0489">Methyltransferase</keyword>
<keyword id="KW-1185">Reference proteome</keyword>
<keyword id="KW-0694">RNA-binding</keyword>
<keyword id="KW-0943">RNA-mediated gene silencing</keyword>
<keyword id="KW-0949">S-adenosyl-L-methionine</keyword>
<keyword id="KW-0808">Transferase</keyword>
<feature type="chain" id="PRO_0000304142" description="Small RNA 2'-O-methyltransferase">
    <location>
        <begin position="1"/>
        <end position="394"/>
    </location>
</feature>
<feature type="binding site" evidence="3">
    <location>
        <position position="78"/>
    </location>
    <ligand>
        <name>S-adenosyl-L-methionine</name>
        <dbReference type="ChEBI" id="CHEBI:59789"/>
    </ligand>
</feature>
<feature type="binding site" evidence="3">
    <location>
        <position position="114"/>
    </location>
    <ligand>
        <name>S-adenosyl-L-methionine</name>
        <dbReference type="ChEBI" id="CHEBI:59789"/>
    </ligand>
</feature>
<feature type="binding site" evidence="3">
    <location>
        <position position="132"/>
    </location>
    <ligand>
        <name>Mg(2+)</name>
        <dbReference type="ChEBI" id="CHEBI:18420"/>
    </ligand>
</feature>
<feature type="binding site" evidence="3">
    <location>
        <position position="135"/>
    </location>
    <ligand>
        <name>Mg(2+)</name>
        <dbReference type="ChEBI" id="CHEBI:18420"/>
    </ligand>
</feature>
<feature type="binding site" evidence="3">
    <location>
        <position position="136"/>
    </location>
    <ligand>
        <name>Mg(2+)</name>
        <dbReference type="ChEBI" id="CHEBI:18420"/>
    </ligand>
</feature>
<feature type="binding site" evidence="3">
    <location>
        <position position="181"/>
    </location>
    <ligand>
        <name>Mg(2+)</name>
        <dbReference type="ChEBI" id="CHEBI:18420"/>
    </ligand>
</feature>
<name>HENMT_RAT</name>
<reference key="1">
    <citation type="journal article" date="2004" name="Genome Res.">
        <title>The status, quality, and expansion of the NIH full-length cDNA project: the Mammalian Gene Collection (MGC).</title>
        <authorList>
            <consortium name="The MGC Project Team"/>
        </authorList>
    </citation>
    <scope>NUCLEOTIDE SEQUENCE [LARGE SCALE MRNA]</scope>
    <source>
        <tissue>Testis</tissue>
    </source>
</reference>
<accession>Q32PY6</accession>
<organism>
    <name type="scientific">Rattus norvegicus</name>
    <name type="common">Rat</name>
    <dbReference type="NCBI Taxonomy" id="10116"/>
    <lineage>
        <taxon>Eukaryota</taxon>
        <taxon>Metazoa</taxon>
        <taxon>Chordata</taxon>
        <taxon>Craniata</taxon>
        <taxon>Vertebrata</taxon>
        <taxon>Euteleostomi</taxon>
        <taxon>Mammalia</taxon>
        <taxon>Eutheria</taxon>
        <taxon>Euarchontoglires</taxon>
        <taxon>Glires</taxon>
        <taxon>Rodentia</taxon>
        <taxon>Myomorpha</taxon>
        <taxon>Muroidea</taxon>
        <taxon>Muridae</taxon>
        <taxon>Murinae</taxon>
        <taxon>Rattus</taxon>
    </lineage>
</organism>
<protein>
    <recommendedName>
        <fullName>Small RNA 2'-O-methyltransferase</fullName>
        <ecNumber evidence="2">2.1.1.386</ecNumber>
    </recommendedName>
    <alternativeName>
        <fullName>HEN1 methyltransferase homolog 1</fullName>
    </alternativeName>
</protein>